<comment type="function">
    <text evidence="5">Catalyzes the cleavage of 5-oxo-L-proline to form L-glutamate coupled to the hydrolysis of ATP to ADP and inorganic phosphate.</text>
</comment>
<comment type="catalytic activity">
    <reaction evidence="5">
        <text>5-oxo-L-proline + ATP + 2 H2O = L-glutamate + ADP + phosphate + H(+)</text>
        <dbReference type="Rhea" id="RHEA:10348"/>
        <dbReference type="ChEBI" id="CHEBI:15377"/>
        <dbReference type="ChEBI" id="CHEBI:15378"/>
        <dbReference type="ChEBI" id="CHEBI:29985"/>
        <dbReference type="ChEBI" id="CHEBI:30616"/>
        <dbReference type="ChEBI" id="CHEBI:43474"/>
        <dbReference type="ChEBI" id="CHEBI:58402"/>
        <dbReference type="ChEBI" id="CHEBI:456216"/>
        <dbReference type="EC" id="3.5.2.9"/>
    </reaction>
</comment>
<comment type="subunit">
    <text evidence="1">Homodimer.</text>
</comment>
<comment type="subcellular location">
    <subcellularLocation>
        <location evidence="5">Cytoplasm</location>
        <location evidence="5">Cytosol</location>
    </subcellularLocation>
</comment>
<comment type="tissue specificity">
    <text evidence="5">Expressed in coronary artery and kidney.</text>
</comment>
<comment type="similarity">
    <text evidence="7">Belongs to the oxoprolinase family.</text>
</comment>
<protein>
    <recommendedName>
        <fullName>5-oxoprolinase</fullName>
        <ecNumber evidence="5">3.5.2.9</ecNumber>
    </recommendedName>
    <alternativeName>
        <fullName evidence="6">5-oxo-L-prolinase</fullName>
        <shortName>5-OPase</shortName>
    </alternativeName>
    <alternativeName>
        <fullName>Pyroglutamase</fullName>
    </alternativeName>
</protein>
<keyword id="KW-0067">ATP-binding</keyword>
<keyword id="KW-0963">Cytoplasm</keyword>
<keyword id="KW-0903">Direct protein sequencing</keyword>
<keyword id="KW-0378">Hydrolase</keyword>
<keyword id="KW-0547">Nucleotide-binding</keyword>
<keyword id="KW-0597">Phosphoprotein</keyword>
<keyword id="KW-1185">Reference proteome</keyword>
<proteinExistence type="evidence at protein level"/>
<gene>
    <name type="primary">OPLAH</name>
</gene>
<evidence type="ECO:0000250" key="1"/>
<evidence type="ECO:0000250" key="2">
    <source>
        <dbReference type="UniProtKB" id="O14841"/>
    </source>
</evidence>
<evidence type="ECO:0000250" key="3">
    <source>
        <dbReference type="UniProtKB" id="P97608"/>
    </source>
</evidence>
<evidence type="ECO:0000256" key="4">
    <source>
        <dbReference type="SAM" id="MobiDB-lite"/>
    </source>
</evidence>
<evidence type="ECO:0000269" key="5">
    <source>
    </source>
</evidence>
<evidence type="ECO:0000303" key="6">
    <source>
    </source>
</evidence>
<evidence type="ECO:0000305" key="7"/>
<dbReference type="EC" id="3.5.2.9" evidence="5"/>
<dbReference type="EMBL" id="AB121737">
    <property type="protein sequence ID" value="BAD13433.1"/>
    <property type="molecule type" value="mRNA"/>
</dbReference>
<dbReference type="EMBL" id="NKLS02000014">
    <property type="status" value="NOT_ANNOTATED_CDS"/>
    <property type="molecule type" value="Genomic_DNA"/>
</dbReference>
<dbReference type="RefSeq" id="NP_001001173.2">
    <property type="nucleotide sequence ID" value="NM_001001173.2"/>
</dbReference>
<dbReference type="RefSeq" id="XP_005215194.1">
    <property type="nucleotide sequence ID" value="XM_005215137.3"/>
</dbReference>
<dbReference type="RefSeq" id="XP_059749124.1">
    <property type="nucleotide sequence ID" value="XM_059893141.1"/>
</dbReference>
<dbReference type="SMR" id="Q75WB5"/>
<dbReference type="FunCoup" id="Q75WB5">
    <property type="interactions" value="1322"/>
</dbReference>
<dbReference type="STRING" id="9913.ENSBTAP00000068380"/>
<dbReference type="PaxDb" id="9913-ENSBTAP00000022981"/>
<dbReference type="GeneID" id="408006"/>
<dbReference type="KEGG" id="bta:408006"/>
<dbReference type="CTD" id="26873"/>
<dbReference type="VEuPathDB" id="HostDB:ENSBTAG00000017281"/>
<dbReference type="eggNOG" id="KOG1939">
    <property type="taxonomic scope" value="Eukaryota"/>
</dbReference>
<dbReference type="HOGENOM" id="CLU_002157_0_1_1"/>
<dbReference type="InParanoid" id="Q75WB5"/>
<dbReference type="OrthoDB" id="3643at2759"/>
<dbReference type="TreeFam" id="TF300520"/>
<dbReference type="BRENDA" id="3.5.2.9">
    <property type="organism ID" value="908"/>
</dbReference>
<dbReference type="Proteomes" id="UP000009136">
    <property type="component" value="Chromosome 14"/>
</dbReference>
<dbReference type="Bgee" id="ENSBTAG00000017281">
    <property type="expression patterns" value="Expressed in laryngeal cartilage and 103 other cell types or tissues"/>
</dbReference>
<dbReference type="GO" id="GO:0005829">
    <property type="term" value="C:cytosol"/>
    <property type="evidence" value="ECO:0000314"/>
    <property type="project" value="UniProtKB"/>
</dbReference>
<dbReference type="GO" id="GO:0017168">
    <property type="term" value="F:5-oxoprolinase (ATP-hydrolyzing) activity"/>
    <property type="evidence" value="ECO:0000314"/>
    <property type="project" value="UniProtKB"/>
</dbReference>
<dbReference type="GO" id="GO:0005524">
    <property type="term" value="F:ATP binding"/>
    <property type="evidence" value="ECO:0007669"/>
    <property type="project" value="UniProtKB-KW"/>
</dbReference>
<dbReference type="GO" id="GO:0042802">
    <property type="term" value="F:identical protein binding"/>
    <property type="evidence" value="ECO:0007669"/>
    <property type="project" value="Ensembl"/>
</dbReference>
<dbReference type="GO" id="GO:0006749">
    <property type="term" value="P:glutathione metabolic process"/>
    <property type="evidence" value="ECO:0000318"/>
    <property type="project" value="GO_Central"/>
</dbReference>
<dbReference type="InterPro" id="IPR049517">
    <property type="entry name" value="ACX-like_C"/>
</dbReference>
<dbReference type="InterPro" id="IPR008040">
    <property type="entry name" value="Hydant_A_N"/>
</dbReference>
<dbReference type="InterPro" id="IPR002821">
    <property type="entry name" value="Hydantoinase_A"/>
</dbReference>
<dbReference type="InterPro" id="IPR003692">
    <property type="entry name" value="Hydantoinase_B"/>
</dbReference>
<dbReference type="InterPro" id="IPR045079">
    <property type="entry name" value="Oxoprolinase-like"/>
</dbReference>
<dbReference type="PANTHER" id="PTHR11365:SF2">
    <property type="entry name" value="5-OXOPROLINASE"/>
    <property type="match status" value="1"/>
</dbReference>
<dbReference type="PANTHER" id="PTHR11365">
    <property type="entry name" value="5-OXOPROLINASE RELATED"/>
    <property type="match status" value="1"/>
</dbReference>
<dbReference type="Pfam" id="PF19278">
    <property type="entry name" value="Hydant_A_C"/>
    <property type="match status" value="1"/>
</dbReference>
<dbReference type="Pfam" id="PF05378">
    <property type="entry name" value="Hydant_A_N"/>
    <property type="match status" value="1"/>
</dbReference>
<dbReference type="Pfam" id="PF01968">
    <property type="entry name" value="Hydantoinase_A"/>
    <property type="match status" value="1"/>
</dbReference>
<dbReference type="Pfam" id="PF02538">
    <property type="entry name" value="Hydantoinase_B"/>
    <property type="match status" value="1"/>
</dbReference>
<name>OPLA_BOVIN</name>
<feature type="chain" id="PRO_0000208576" description="5-oxoprolinase">
    <location>
        <begin position="1"/>
        <end position="1288"/>
    </location>
</feature>
<feature type="region of interest" description="Disordered" evidence="4">
    <location>
        <begin position="1249"/>
        <end position="1269"/>
    </location>
</feature>
<feature type="modified residue" description="Phosphothreonine" evidence="2">
    <location>
        <position position="151"/>
    </location>
</feature>
<feature type="modified residue" description="Phosphoserine" evidence="3">
    <location>
        <position position="1265"/>
    </location>
</feature>
<feature type="sequence conflict" description="In Ref. 1; BAD13433." evidence="7" ref="1">
    <original>R</original>
    <variation>Q</variation>
    <location>
        <position position="91"/>
    </location>
</feature>
<feature type="sequence conflict" description="In Ref. 1; BAD13433." evidence="7" ref="1">
    <original>G</original>
    <variation>C</variation>
    <location>
        <position position="111"/>
    </location>
</feature>
<feature type="sequence conflict" description="In Ref. 1; BAD13433." evidence="7" ref="1">
    <original>G</original>
    <variation>W</variation>
    <location>
        <position position="174"/>
    </location>
</feature>
<feature type="sequence conflict" description="In Ref. 1; BAD13433." evidence="7" ref="1">
    <original>S</original>
    <variation>T</variation>
    <location>
        <position position="739"/>
    </location>
</feature>
<feature type="sequence conflict" description="In Ref. 1; BAD13433." evidence="7" ref="1">
    <original>A</original>
    <variation>V</variation>
    <location>
        <position position="786"/>
    </location>
</feature>
<feature type="sequence conflict" description="In Ref. 1; BAD13433." evidence="7" ref="1">
    <original>E</original>
    <variation>G</variation>
    <location>
        <position position="1257"/>
    </location>
</feature>
<reference key="1">
    <citation type="journal article" date="2004" name="Biol. Pharm. Bull.">
        <title>Bovine 5-oxo-L-prolinase: simple assay method, purification, cDNA cloning, and detection of mRNA in the coronary artery.</title>
        <authorList>
            <person name="Watanabe T."/>
            <person name="Abe K."/>
            <person name="Ishikawa H."/>
            <person name="Iijima Y."/>
        </authorList>
    </citation>
    <scope>NUCLEOTIDE SEQUENCE [MRNA]</scope>
    <scope>PROTEIN SEQUENCE OF 3-14</scope>
    <scope>TISSUE SPECIFICITY</scope>
    <scope>FUNCTION</scope>
    <scope>CATALYTIC ACTIVITY</scope>
    <scope>SUBCELLULAR LOCATION</scope>
    <source>
        <tissue>Kidney</tissue>
    </source>
</reference>
<sequence length="1288" mass="137354">MGGPEGRFHFAIDRGGTFTDVFAQCPGGHVRVLKLLSEDPANYVDAPTEGIRRILEQEGGVLLPRDRPLDTSRIASIRMGTTVATNALLERQGERVALLVTRGFRDLLHVGTQARADLFDLAVPMPETLYEEVLEVDERVVLYRGEPGAGTPVKGCTGDLLEVQQPVDLGGLRGKLEGLLSRGIRSLAVVLMHSYTWAQHEQQVGALARELGFTHVSLSSEAMPMVRIVPRGHTACADAYLTPTIQRYVQGFRRGFQGQLKDVQVLFMRSDGGLAPMDSFSGSRAVLSGPAGGVVGYSATTYRVEGGQPVIGFDMGGTSTDVSRYAGEFEHVFEASTAGVTLQAPQLDINTVAAGGGSRLFFRSGLFVVGPESAGAHPGPACYRKGGPVTVTDANLVLGRLLPASFPCIFGPGEDQPLSPEASRKALEAVATEVNSFLTNGPCPASPLSLEEVAMGFVRVANEAMCRPIRALTQARGHDPSAHVLACFGGAGGQHACAIARALGMDTVHIHRHSGLLSALGLALADVVHEAQEPCSLPYAPETFAQLDQRLGRLEEQCVEALRAQGFPRSQISTESFLHLRYQGTDCALMVSAHQHPASARSPRAGDFGAAFVERYMREFGFIIPERPVVVDDVRVRGTGSSSLRLEDVPKAHSGPPRVDKMTQCYFEGGYQETPVYLLGELGCGHKLQGPCLIIDSNSTILVEPGCQAEVTETGDIRISVGAETASVVGTQLDPIHLSIFSHRFMSIAEQMGRILQRTAISTNIKERLDFSCALFGPDGGLVSNAPHIPVHLGAMQETVQFQIQQLGADLHPGDVLLSNHPSAGGSHLPDLTVITPVFWPGQTRPVFYVASRGHHADIGGITPGSMPPHSTSLQQEGAVFLSFKLVHGGVFQEEAVTEALRAPGKIPGCSGTRNLHDNLSDLRAQVAANQKGIQLVGELIGQYGLDVVQAYMGHIQANAELAVRDMLRAFGTARQARGLPLEVSAEDHMDDGSPIRLRVQINMSQGSAVFDFSGSGPEVFGNLNAPRAITLSALIYCLRCLVGRDIPLNQGCLAPVRVVIPKGSILDPSPDAAVVGGNVLTSQRVVDVILGAFGACAASQGCMNNVTLGNAHMGYYETVAGGAGAGPGWHGRSGVHSHMTNTRITDPEILESRYPVILRRFELRLGSGGRGRFRGGDGIIRELLFREEALLSVLTERRAFQPYGLMGGEPGARGLNLLIRKDGRTVNLGGKTSVPVYPGDVFCLHTPGGGGYGDPEDPAPLPGSPLQPLAFPERGSVYEYRRAQEAV</sequence>
<organism>
    <name type="scientific">Bos taurus</name>
    <name type="common">Bovine</name>
    <dbReference type="NCBI Taxonomy" id="9913"/>
    <lineage>
        <taxon>Eukaryota</taxon>
        <taxon>Metazoa</taxon>
        <taxon>Chordata</taxon>
        <taxon>Craniata</taxon>
        <taxon>Vertebrata</taxon>
        <taxon>Euteleostomi</taxon>
        <taxon>Mammalia</taxon>
        <taxon>Eutheria</taxon>
        <taxon>Laurasiatheria</taxon>
        <taxon>Artiodactyla</taxon>
        <taxon>Ruminantia</taxon>
        <taxon>Pecora</taxon>
        <taxon>Bovidae</taxon>
        <taxon>Bovinae</taxon>
        <taxon>Bos</taxon>
    </lineage>
</organism>
<accession>Q75WB5</accession>
<accession>F1ME97</accession>